<reference key="1">
    <citation type="submission" date="2007-03" db="EMBL/GenBank/DDBJ databases">
        <title>Sequencing analysis of Aethionema coridifolium chloroplast DNA.</title>
        <authorList>
            <person name="Hosouchi T."/>
            <person name="Tsuruoka H."/>
            <person name="Kotani H."/>
        </authorList>
    </citation>
    <scope>NUCLEOTIDE SEQUENCE [LARGE SCALE GENOMIC DNA]</scope>
</reference>
<protein>
    <recommendedName>
        <fullName evidence="1">DNA-directed RNA polymerase subunit beta''</fullName>
        <ecNumber evidence="1">2.7.7.6</ecNumber>
    </recommendedName>
    <alternativeName>
        <fullName evidence="1">PEP</fullName>
    </alternativeName>
    <alternativeName>
        <fullName evidence="1">Plastid-encoded RNA polymerase subunit beta''</fullName>
        <shortName evidence="1">RNA polymerase subunit beta''</shortName>
    </alternativeName>
</protein>
<geneLocation type="chloroplast"/>
<organism>
    <name type="scientific">Aethionema cordifolium</name>
    <name type="common">Lebanon stonecress</name>
    <dbReference type="NCBI Taxonomy" id="434059"/>
    <lineage>
        <taxon>Eukaryota</taxon>
        <taxon>Viridiplantae</taxon>
        <taxon>Streptophyta</taxon>
        <taxon>Embryophyta</taxon>
        <taxon>Tracheophyta</taxon>
        <taxon>Spermatophyta</taxon>
        <taxon>Magnoliopsida</taxon>
        <taxon>eudicotyledons</taxon>
        <taxon>Gunneridae</taxon>
        <taxon>Pentapetalae</taxon>
        <taxon>rosids</taxon>
        <taxon>malvids</taxon>
        <taxon>Brassicales</taxon>
        <taxon>Brassicaceae</taxon>
        <taxon>Aethionemeae</taxon>
        <taxon>Aethionema</taxon>
    </lineage>
</organism>
<feature type="chain" id="PRO_0000353542" description="DNA-directed RNA polymerase subunit beta''">
    <location>
        <begin position="1"/>
        <end position="1385"/>
    </location>
</feature>
<feature type="binding site" evidence="1">
    <location>
        <position position="220"/>
    </location>
    <ligand>
        <name>Zn(2+)</name>
        <dbReference type="ChEBI" id="CHEBI:29105"/>
    </ligand>
</feature>
<feature type="binding site" evidence="1">
    <location>
        <position position="293"/>
    </location>
    <ligand>
        <name>Zn(2+)</name>
        <dbReference type="ChEBI" id="CHEBI:29105"/>
    </ligand>
</feature>
<feature type="binding site" evidence="1">
    <location>
        <position position="300"/>
    </location>
    <ligand>
        <name>Zn(2+)</name>
        <dbReference type="ChEBI" id="CHEBI:29105"/>
    </ligand>
</feature>
<feature type="binding site" evidence="1">
    <location>
        <position position="303"/>
    </location>
    <ligand>
        <name>Zn(2+)</name>
        <dbReference type="ChEBI" id="CHEBI:29105"/>
    </ligand>
</feature>
<keyword id="KW-0150">Chloroplast</keyword>
<keyword id="KW-0240">DNA-directed RNA polymerase</keyword>
<keyword id="KW-0479">Metal-binding</keyword>
<keyword id="KW-0548">Nucleotidyltransferase</keyword>
<keyword id="KW-0934">Plastid</keyword>
<keyword id="KW-0804">Transcription</keyword>
<keyword id="KW-0808">Transferase</keyword>
<keyword id="KW-0862">Zinc</keyword>
<evidence type="ECO:0000255" key="1">
    <source>
        <dbReference type="HAMAP-Rule" id="MF_01324"/>
    </source>
</evidence>
<comment type="function">
    <text evidence="1">DNA-dependent RNA polymerase catalyzes the transcription of DNA into RNA using the four ribonucleoside triphosphates as substrates.</text>
</comment>
<comment type="catalytic activity">
    <reaction evidence="1">
        <text>RNA(n) + a ribonucleoside 5'-triphosphate = RNA(n+1) + diphosphate</text>
        <dbReference type="Rhea" id="RHEA:21248"/>
        <dbReference type="Rhea" id="RHEA-COMP:14527"/>
        <dbReference type="Rhea" id="RHEA-COMP:17342"/>
        <dbReference type="ChEBI" id="CHEBI:33019"/>
        <dbReference type="ChEBI" id="CHEBI:61557"/>
        <dbReference type="ChEBI" id="CHEBI:140395"/>
        <dbReference type="EC" id="2.7.7.6"/>
    </reaction>
</comment>
<comment type="cofactor">
    <cofactor evidence="1">
        <name>Zn(2+)</name>
        <dbReference type="ChEBI" id="CHEBI:29105"/>
    </cofactor>
    <text evidence="1">Binds 1 Zn(2+) ion per subunit.</text>
</comment>
<comment type="subunit">
    <text evidence="1">In plastids the minimal PEP RNA polymerase catalytic core is composed of four subunits: alpha, beta, beta', and beta''. When a (nuclear-encoded) sigma factor is associated with the core the holoenzyme is formed, which can initiate transcription.</text>
</comment>
<comment type="subcellular location">
    <subcellularLocation>
        <location evidence="1">Plastid</location>
        <location evidence="1">Chloroplast</location>
    </subcellularLocation>
</comment>
<comment type="similarity">
    <text evidence="1">Belongs to the RNA polymerase beta' chain family. RpoC2 subfamily.</text>
</comment>
<name>RPOC2_AETCO</name>
<accession>A4QJA5</accession>
<sequence length="1385" mass="157531">MAERANLVFHNKVIDGTAIKRLISRLIDHFGMAYTSHILDQVKTLGFQQATATSISLGIDDLLTIPSKGWLVQDAEQQSLILEKHHHYGNVHAVEKLRQSIEIWYATSEYLRQEMNPNFRMTDPFNPVHMMSFSGARGNASQVHQLVGMRGLMSDPQGQMIDLPIQSNLREGLSLTEYIISCYGARKGVVDTAVRTSDAGYLTRRLVEVVQHIVVRRTDCGTIRGISVSPRNKNRMMSERIFIQTLIGRVLADDIYIGSRCVAFRNQDLGIGLVNRFITFGTQSISIRTPFTCRSTSWICRFCYGRSPTHGDLVELGEAVGIIAGQSIGEPGTQLTLRTFHTGGVFTGGTAEHVRAPYNGKIKFNEDLVHPTRTRHGHPAFLCYIDLSVIIESEDIIHSVTIPPKSFLLVQNDQYVESEQVIAEIREGTYTFRFKERVRKYIYSDSEGEMHWSTDVYHAPEFTYSNVHLVPKTSHLWILSGGSCGASLILFSIHKDQDQMNIPFLSVKRKSICSLSVNNDQVSQKFFSSDFSDKKKSGIPDYSELNGIVGTSHYNLIYSAIFHENSDLLAKRRRNRFLIPFESIQEQEQEKEFMPHSGISIAIPINGIFRKNTIFSFFDDPRYRRKSSGILKYGTIEADSIIQKEDMIEYRGVHKFKKNYKMKVDRFFFIPEEVHILPESSVIMVQNYSIIRVDTRITLNIRSQVGGLIRVERKKKRIELKIFSGDIHFPDKTDKISRHSGILIPPGRGKPNSRESKKVKNWIYVQRITPTKKKFFVLVRPVATYEIADSINLATLFPQDLFREKNNIQLRVVNYILYGNGKPTRGISDTSIQLVRTCLVLNWDQDNKNSSLEEARAFFVAVSTKGLIRDFIRIGLVKSHISYIRKRNNPPDSGLISADHMNPFYSISPKAGIQQSLSQNNGTIRMFLNRNKESQFLLILSSSNCFRMGPFDHVKYHNVINQSIKKNPLITIKNASGPLGTTIQISNFYSFFPLLTYNKMSVIKYLQLDNLKQILKVINSYLIDENGRICNRDPYSNVVLNPFKLNWYFLHQNYHHNYCEEMSTLISLGQFFCENVCIAKKGPHLKSGQALIVQMDSVVIRSAKPYLATPGAKVHGHYGEILYEGDTLVTFIYEKSRSGDITQGLPKVEQVLEVRSIDSISMNLEKRIKGWNKYITGILGIPWGFLVGAELTIVQSRLSLVNKIQKVYRSQGVQIHNRHIEIIVRQITSKVLVSEEGMSNVFLPGELIGLLRAERTGRALEEAISYRAILLGITRASLNTQSFISEASFQETARVLAKAALRGRIDWLKGLKENVVLGGGIPAGTGFNKGLVHCSRQHTNILLEKKTKNFCLFEEDMRDILFYHREFFDSSISKFERSFLGFNDS</sequence>
<dbReference type="EC" id="2.7.7.6" evidence="1"/>
<dbReference type="EMBL" id="AP009366">
    <property type="protein sequence ID" value="BAF49760.1"/>
    <property type="molecule type" value="Genomic_DNA"/>
</dbReference>
<dbReference type="RefSeq" id="YP_001122936.1">
    <property type="nucleotide sequence ID" value="NC_009265.1"/>
</dbReference>
<dbReference type="SMR" id="A4QJA5"/>
<dbReference type="GeneID" id="4968659"/>
<dbReference type="GO" id="GO:0009507">
    <property type="term" value="C:chloroplast"/>
    <property type="evidence" value="ECO:0007669"/>
    <property type="project" value="UniProtKB-SubCell"/>
</dbReference>
<dbReference type="GO" id="GO:0000428">
    <property type="term" value="C:DNA-directed RNA polymerase complex"/>
    <property type="evidence" value="ECO:0007669"/>
    <property type="project" value="UniProtKB-KW"/>
</dbReference>
<dbReference type="GO" id="GO:0005739">
    <property type="term" value="C:mitochondrion"/>
    <property type="evidence" value="ECO:0007669"/>
    <property type="project" value="GOC"/>
</dbReference>
<dbReference type="GO" id="GO:0003677">
    <property type="term" value="F:DNA binding"/>
    <property type="evidence" value="ECO:0007669"/>
    <property type="project" value="UniProtKB-UniRule"/>
</dbReference>
<dbReference type="GO" id="GO:0003899">
    <property type="term" value="F:DNA-directed RNA polymerase activity"/>
    <property type="evidence" value="ECO:0007669"/>
    <property type="project" value="UniProtKB-UniRule"/>
</dbReference>
<dbReference type="GO" id="GO:0008270">
    <property type="term" value="F:zinc ion binding"/>
    <property type="evidence" value="ECO:0007669"/>
    <property type="project" value="UniProtKB-UniRule"/>
</dbReference>
<dbReference type="GO" id="GO:0006351">
    <property type="term" value="P:DNA-templated transcription"/>
    <property type="evidence" value="ECO:0007669"/>
    <property type="project" value="UniProtKB-UniRule"/>
</dbReference>
<dbReference type="CDD" id="cd02655">
    <property type="entry name" value="RNAP_beta'_C"/>
    <property type="match status" value="1"/>
</dbReference>
<dbReference type="FunFam" id="1.10.132.30:FF:000002">
    <property type="entry name" value="DNA-directed RNA polymerase subunit beta"/>
    <property type="match status" value="1"/>
</dbReference>
<dbReference type="FunFam" id="1.10.1790.20:FF:000002">
    <property type="entry name" value="DNA-directed RNA polymerase subunit beta"/>
    <property type="match status" value="1"/>
</dbReference>
<dbReference type="FunFam" id="1.10.274.100:FF:000011">
    <property type="entry name" value="DNA-directed RNA polymerase subunit beta"/>
    <property type="match status" value="1"/>
</dbReference>
<dbReference type="Gene3D" id="1.10.132.30">
    <property type="match status" value="1"/>
</dbReference>
<dbReference type="Gene3D" id="1.10.150.390">
    <property type="match status" value="1"/>
</dbReference>
<dbReference type="Gene3D" id="1.10.1790.20">
    <property type="match status" value="1"/>
</dbReference>
<dbReference type="Gene3D" id="1.10.274.100">
    <property type="entry name" value="RNA polymerase Rpb1, domain 3"/>
    <property type="match status" value="1"/>
</dbReference>
<dbReference type="HAMAP" id="MF_01324">
    <property type="entry name" value="RNApol_bact_RpoC2"/>
    <property type="match status" value="1"/>
</dbReference>
<dbReference type="InterPro" id="IPR012756">
    <property type="entry name" value="DNA-dir_RpoC2_beta_pp"/>
</dbReference>
<dbReference type="InterPro" id="IPR050254">
    <property type="entry name" value="RNA_pol_beta''_euk"/>
</dbReference>
<dbReference type="InterPro" id="IPR042102">
    <property type="entry name" value="RNA_pol_Rpb1_3_sf"/>
</dbReference>
<dbReference type="InterPro" id="IPR007083">
    <property type="entry name" value="RNA_pol_Rpb1_4"/>
</dbReference>
<dbReference type="InterPro" id="IPR007081">
    <property type="entry name" value="RNA_pol_Rpb1_5"/>
</dbReference>
<dbReference type="InterPro" id="IPR038120">
    <property type="entry name" value="Rpb1_funnel_sf"/>
</dbReference>
<dbReference type="NCBIfam" id="TIGR02388">
    <property type="entry name" value="rpoC2_cyan"/>
    <property type="match status" value="1"/>
</dbReference>
<dbReference type="PANTHER" id="PTHR34995">
    <property type="entry name" value="DNA-DIRECTED RNA POLYMERASE SUBUNIT BETA"/>
    <property type="match status" value="1"/>
</dbReference>
<dbReference type="PANTHER" id="PTHR34995:SF1">
    <property type="entry name" value="DNA-DIRECTED RNA POLYMERASE SUBUNIT BETA"/>
    <property type="match status" value="1"/>
</dbReference>
<dbReference type="Pfam" id="PF05000">
    <property type="entry name" value="RNA_pol_Rpb1_4"/>
    <property type="match status" value="1"/>
</dbReference>
<dbReference type="Pfam" id="PF04998">
    <property type="entry name" value="RNA_pol_Rpb1_5"/>
    <property type="match status" value="2"/>
</dbReference>
<dbReference type="SUPFAM" id="SSF64484">
    <property type="entry name" value="beta and beta-prime subunits of DNA dependent RNA-polymerase"/>
    <property type="match status" value="1"/>
</dbReference>
<proteinExistence type="inferred from homology"/>
<gene>
    <name evidence="1" type="primary">rpoC2</name>
</gene>